<comment type="function">
    <text evidence="1">A translational regulator that binds mRNA to regulate translation initiation and/or mRNA stability. Usually binds in the 5'-UTR at or near the Shine-Dalgarno sequence preventing ribosome-binding, thus repressing translation. Its main target seems to be the major flagellin gene, while its function is anatagonized by FliW.</text>
</comment>
<comment type="subunit">
    <text evidence="1">Homodimer; the beta-strands of each monomer intercalate to form a hydrophobic core, while the alpha-helices form wings that extend away from the core.</text>
</comment>
<comment type="subcellular location">
    <subcellularLocation>
        <location evidence="1">Cytoplasm</location>
    </subcellularLocation>
</comment>
<comment type="similarity">
    <text evidence="1">Belongs to the CsrA/RsmA family.</text>
</comment>
<organism>
    <name type="scientific">Desulforapulum autotrophicum (strain ATCC 43914 / DSM 3382 / VKM B-1955 / HRM2)</name>
    <name type="common">Desulfobacterium autotrophicum</name>
    <dbReference type="NCBI Taxonomy" id="177437"/>
    <lineage>
        <taxon>Bacteria</taxon>
        <taxon>Pseudomonadati</taxon>
        <taxon>Thermodesulfobacteriota</taxon>
        <taxon>Desulfobacteria</taxon>
        <taxon>Desulfobacterales</taxon>
        <taxon>Desulfobacteraceae</taxon>
        <taxon>Desulforapulum</taxon>
    </lineage>
</organism>
<feature type="chain" id="PRO_1000203638" description="Translational regulator CsrA">
    <location>
        <begin position="1"/>
        <end position="81"/>
    </location>
</feature>
<keyword id="KW-1005">Bacterial flagellum biogenesis</keyword>
<keyword id="KW-0963">Cytoplasm</keyword>
<keyword id="KW-1185">Reference proteome</keyword>
<keyword id="KW-0678">Repressor</keyword>
<keyword id="KW-0694">RNA-binding</keyword>
<keyword id="KW-0810">Translation regulation</keyword>
<accession>C0QA34</accession>
<protein>
    <recommendedName>
        <fullName evidence="1">Translational regulator CsrA</fullName>
    </recommendedName>
</protein>
<sequence length="81" mass="9060">MLVLTRKVGESIRISDDIVVKVIDIGKNRIRIGIDAPSTVSVLRNEVYEEIHQENILSSRGSVTDLAKAATLWARKSKKEE</sequence>
<name>CSRA_DESAH</name>
<proteinExistence type="inferred from homology"/>
<evidence type="ECO:0000255" key="1">
    <source>
        <dbReference type="HAMAP-Rule" id="MF_00167"/>
    </source>
</evidence>
<reference key="1">
    <citation type="journal article" date="2009" name="Environ. Microbiol.">
        <title>Genome sequence of Desulfobacterium autotrophicum HRM2, a marine sulfate reducer oxidizing organic carbon completely to carbon dioxide.</title>
        <authorList>
            <person name="Strittmatter A.W."/>
            <person name="Liesegang H."/>
            <person name="Rabus R."/>
            <person name="Decker I."/>
            <person name="Amann J."/>
            <person name="Andres S."/>
            <person name="Henne A."/>
            <person name="Fricke W.F."/>
            <person name="Martinez-Arias R."/>
            <person name="Bartels D."/>
            <person name="Goesmann A."/>
            <person name="Krause L."/>
            <person name="Puehler A."/>
            <person name="Klenk H.P."/>
            <person name="Richter M."/>
            <person name="Schuler M."/>
            <person name="Gloeckner F.O."/>
            <person name="Meyerdierks A."/>
            <person name="Gottschalk G."/>
            <person name="Amann R."/>
        </authorList>
    </citation>
    <scope>NUCLEOTIDE SEQUENCE [LARGE SCALE GENOMIC DNA]</scope>
    <source>
        <strain>ATCC 43914 / DSM 3382 / VKM B-1955 / HRM2</strain>
    </source>
</reference>
<dbReference type="EMBL" id="CP001087">
    <property type="protein sequence ID" value="ACN16752.1"/>
    <property type="molecule type" value="Genomic_DNA"/>
</dbReference>
<dbReference type="RefSeq" id="WP_015905498.1">
    <property type="nucleotide sequence ID" value="NC_012108.1"/>
</dbReference>
<dbReference type="SMR" id="C0QA34"/>
<dbReference type="STRING" id="177437.HRM2_36940"/>
<dbReference type="KEGG" id="dat:HRM2_36940"/>
<dbReference type="eggNOG" id="COG1551">
    <property type="taxonomic scope" value="Bacteria"/>
</dbReference>
<dbReference type="HOGENOM" id="CLU_164837_0_0_7"/>
<dbReference type="OrthoDB" id="9809061at2"/>
<dbReference type="Proteomes" id="UP000000442">
    <property type="component" value="Chromosome"/>
</dbReference>
<dbReference type="GO" id="GO:0005829">
    <property type="term" value="C:cytosol"/>
    <property type="evidence" value="ECO:0007669"/>
    <property type="project" value="TreeGrafter"/>
</dbReference>
<dbReference type="GO" id="GO:0048027">
    <property type="term" value="F:mRNA 5'-UTR binding"/>
    <property type="evidence" value="ECO:0007669"/>
    <property type="project" value="UniProtKB-UniRule"/>
</dbReference>
<dbReference type="GO" id="GO:0044781">
    <property type="term" value="P:bacterial-type flagellum organization"/>
    <property type="evidence" value="ECO:0007669"/>
    <property type="project" value="UniProtKB-KW"/>
</dbReference>
<dbReference type="GO" id="GO:0006402">
    <property type="term" value="P:mRNA catabolic process"/>
    <property type="evidence" value="ECO:0007669"/>
    <property type="project" value="InterPro"/>
</dbReference>
<dbReference type="GO" id="GO:0045947">
    <property type="term" value="P:negative regulation of translational initiation"/>
    <property type="evidence" value="ECO:0007669"/>
    <property type="project" value="UniProtKB-UniRule"/>
</dbReference>
<dbReference type="GO" id="GO:1902208">
    <property type="term" value="P:regulation of bacterial-type flagellum assembly"/>
    <property type="evidence" value="ECO:0007669"/>
    <property type="project" value="UniProtKB-UniRule"/>
</dbReference>
<dbReference type="GO" id="GO:0006109">
    <property type="term" value="P:regulation of carbohydrate metabolic process"/>
    <property type="evidence" value="ECO:0007669"/>
    <property type="project" value="InterPro"/>
</dbReference>
<dbReference type="FunFam" id="2.60.40.4380:FF:000002">
    <property type="entry name" value="Translational regulator CsrA"/>
    <property type="match status" value="1"/>
</dbReference>
<dbReference type="Gene3D" id="2.60.40.4380">
    <property type="entry name" value="Translational regulator CsrA"/>
    <property type="match status" value="1"/>
</dbReference>
<dbReference type="HAMAP" id="MF_00167">
    <property type="entry name" value="CsrA"/>
    <property type="match status" value="1"/>
</dbReference>
<dbReference type="InterPro" id="IPR003751">
    <property type="entry name" value="CsrA"/>
</dbReference>
<dbReference type="InterPro" id="IPR036107">
    <property type="entry name" value="CsrA_sf"/>
</dbReference>
<dbReference type="NCBIfam" id="TIGR00202">
    <property type="entry name" value="csrA"/>
    <property type="match status" value="1"/>
</dbReference>
<dbReference type="NCBIfam" id="NF002469">
    <property type="entry name" value="PRK01712.1"/>
    <property type="match status" value="1"/>
</dbReference>
<dbReference type="PANTHER" id="PTHR34984">
    <property type="entry name" value="CARBON STORAGE REGULATOR"/>
    <property type="match status" value="1"/>
</dbReference>
<dbReference type="PANTHER" id="PTHR34984:SF1">
    <property type="entry name" value="CARBON STORAGE REGULATOR"/>
    <property type="match status" value="1"/>
</dbReference>
<dbReference type="Pfam" id="PF02599">
    <property type="entry name" value="CsrA"/>
    <property type="match status" value="1"/>
</dbReference>
<dbReference type="SUPFAM" id="SSF117130">
    <property type="entry name" value="CsrA-like"/>
    <property type="match status" value="1"/>
</dbReference>
<gene>
    <name evidence="1" type="primary">csrA</name>
    <name type="ordered locus">HRM2_36940</name>
</gene>